<proteinExistence type="inferred from homology"/>
<dbReference type="EMBL" id="FM204883">
    <property type="protein sequence ID" value="CAW91987.1"/>
    <property type="molecule type" value="Genomic_DNA"/>
</dbReference>
<dbReference type="RefSeq" id="WP_012514741.1">
    <property type="nucleotide sequence ID" value="NC_012471.1"/>
</dbReference>
<dbReference type="SMR" id="C0M9H2"/>
<dbReference type="GeneID" id="83703915"/>
<dbReference type="KEGG" id="seu:SEQ_0066"/>
<dbReference type="HOGENOM" id="CLU_093315_2_0_9"/>
<dbReference type="OrthoDB" id="9807419at2"/>
<dbReference type="Proteomes" id="UP000001365">
    <property type="component" value="Chromosome"/>
</dbReference>
<dbReference type="GO" id="GO:1990904">
    <property type="term" value="C:ribonucleoprotein complex"/>
    <property type="evidence" value="ECO:0007669"/>
    <property type="project" value="UniProtKB-KW"/>
</dbReference>
<dbReference type="GO" id="GO:0005840">
    <property type="term" value="C:ribosome"/>
    <property type="evidence" value="ECO:0007669"/>
    <property type="project" value="UniProtKB-KW"/>
</dbReference>
<dbReference type="GO" id="GO:0019843">
    <property type="term" value="F:rRNA binding"/>
    <property type="evidence" value="ECO:0007669"/>
    <property type="project" value="UniProtKB-UniRule"/>
</dbReference>
<dbReference type="GO" id="GO:0003735">
    <property type="term" value="F:structural constituent of ribosome"/>
    <property type="evidence" value="ECO:0007669"/>
    <property type="project" value="InterPro"/>
</dbReference>
<dbReference type="GO" id="GO:0006412">
    <property type="term" value="P:translation"/>
    <property type="evidence" value="ECO:0007669"/>
    <property type="project" value="UniProtKB-UniRule"/>
</dbReference>
<dbReference type="CDD" id="cd06089">
    <property type="entry name" value="KOW_RPL26"/>
    <property type="match status" value="1"/>
</dbReference>
<dbReference type="FunFam" id="2.30.30.30:FF:000004">
    <property type="entry name" value="50S ribosomal protein L24"/>
    <property type="match status" value="1"/>
</dbReference>
<dbReference type="Gene3D" id="2.30.30.30">
    <property type="match status" value="1"/>
</dbReference>
<dbReference type="HAMAP" id="MF_01326_B">
    <property type="entry name" value="Ribosomal_uL24_B"/>
    <property type="match status" value="1"/>
</dbReference>
<dbReference type="InterPro" id="IPR005824">
    <property type="entry name" value="KOW"/>
</dbReference>
<dbReference type="InterPro" id="IPR014722">
    <property type="entry name" value="Rib_uL2_dom2"/>
</dbReference>
<dbReference type="InterPro" id="IPR003256">
    <property type="entry name" value="Ribosomal_uL24"/>
</dbReference>
<dbReference type="InterPro" id="IPR005825">
    <property type="entry name" value="Ribosomal_uL24_CS"/>
</dbReference>
<dbReference type="InterPro" id="IPR041988">
    <property type="entry name" value="Ribosomal_uL24_KOW"/>
</dbReference>
<dbReference type="InterPro" id="IPR008991">
    <property type="entry name" value="Translation_prot_SH3-like_sf"/>
</dbReference>
<dbReference type="NCBIfam" id="TIGR01079">
    <property type="entry name" value="rplX_bact"/>
    <property type="match status" value="1"/>
</dbReference>
<dbReference type="PANTHER" id="PTHR12903">
    <property type="entry name" value="MITOCHONDRIAL RIBOSOMAL PROTEIN L24"/>
    <property type="match status" value="1"/>
</dbReference>
<dbReference type="Pfam" id="PF00467">
    <property type="entry name" value="KOW"/>
    <property type="match status" value="1"/>
</dbReference>
<dbReference type="Pfam" id="PF17136">
    <property type="entry name" value="ribosomal_L24"/>
    <property type="match status" value="1"/>
</dbReference>
<dbReference type="SMART" id="SM00739">
    <property type="entry name" value="KOW"/>
    <property type="match status" value="1"/>
</dbReference>
<dbReference type="SUPFAM" id="SSF50104">
    <property type="entry name" value="Translation proteins SH3-like domain"/>
    <property type="match status" value="1"/>
</dbReference>
<dbReference type="PROSITE" id="PS01108">
    <property type="entry name" value="RIBOSOMAL_L24"/>
    <property type="match status" value="1"/>
</dbReference>
<name>RL24_STRE4</name>
<protein>
    <recommendedName>
        <fullName evidence="1">Large ribosomal subunit protein uL24</fullName>
    </recommendedName>
    <alternativeName>
        <fullName evidence="2">50S ribosomal protein L24</fullName>
    </alternativeName>
</protein>
<gene>
    <name evidence="1" type="primary">rplX</name>
    <name type="ordered locus">SEQ_0066</name>
</gene>
<keyword id="KW-0687">Ribonucleoprotein</keyword>
<keyword id="KW-0689">Ribosomal protein</keyword>
<keyword id="KW-0694">RNA-binding</keyword>
<keyword id="KW-0699">rRNA-binding</keyword>
<accession>C0M9H2</accession>
<evidence type="ECO:0000255" key="1">
    <source>
        <dbReference type="HAMAP-Rule" id="MF_01326"/>
    </source>
</evidence>
<evidence type="ECO:0000305" key="2"/>
<reference key="1">
    <citation type="journal article" date="2009" name="PLoS Pathog.">
        <title>Genomic evidence for the evolution of Streptococcus equi: host restriction, increased virulence, and genetic exchange with human pathogens.</title>
        <authorList>
            <person name="Holden M.T.G."/>
            <person name="Heather Z."/>
            <person name="Paillot R."/>
            <person name="Steward K.F."/>
            <person name="Webb K."/>
            <person name="Ainslie F."/>
            <person name="Jourdan T."/>
            <person name="Bason N.C."/>
            <person name="Holroyd N.E."/>
            <person name="Mungall K."/>
            <person name="Quail M.A."/>
            <person name="Sanders M."/>
            <person name="Simmonds M."/>
            <person name="Willey D."/>
            <person name="Brooks K."/>
            <person name="Aanensen D.M."/>
            <person name="Spratt B.G."/>
            <person name="Jolley K.A."/>
            <person name="Maiden M.C.J."/>
            <person name="Kehoe M."/>
            <person name="Chanter N."/>
            <person name="Bentley S.D."/>
            <person name="Robinson C."/>
            <person name="Maskell D.J."/>
            <person name="Parkhill J."/>
            <person name="Waller A.S."/>
        </authorList>
    </citation>
    <scope>NUCLEOTIDE SEQUENCE [LARGE SCALE GENOMIC DNA]</scope>
    <source>
        <strain>4047</strain>
    </source>
</reference>
<sequence>MFVKKGDKVRVIAGKDKGVEAVVLKALPKVNKVIVEGVAIIKKHQKPNSENPQGAIVEKEAPIHASNVQVLDKNGVAGRVGYKFVDGKKVRYNKKSGEVLD</sequence>
<organism>
    <name type="scientific">Streptococcus equi subsp. equi (strain 4047)</name>
    <dbReference type="NCBI Taxonomy" id="553482"/>
    <lineage>
        <taxon>Bacteria</taxon>
        <taxon>Bacillati</taxon>
        <taxon>Bacillota</taxon>
        <taxon>Bacilli</taxon>
        <taxon>Lactobacillales</taxon>
        <taxon>Streptococcaceae</taxon>
        <taxon>Streptococcus</taxon>
    </lineage>
</organism>
<feature type="chain" id="PRO_1000165964" description="Large ribosomal subunit protein uL24">
    <location>
        <begin position="1"/>
        <end position="101"/>
    </location>
</feature>
<comment type="function">
    <text evidence="1">One of two assembly initiator proteins, it binds directly to the 5'-end of the 23S rRNA, where it nucleates assembly of the 50S subunit.</text>
</comment>
<comment type="function">
    <text evidence="1">One of the proteins that surrounds the polypeptide exit tunnel on the outside of the subunit.</text>
</comment>
<comment type="subunit">
    <text evidence="1">Part of the 50S ribosomal subunit.</text>
</comment>
<comment type="similarity">
    <text evidence="1">Belongs to the universal ribosomal protein uL24 family.</text>
</comment>